<protein>
    <recommendedName>
        <fullName evidence="2">Small ribosomal subunit protein bS6</fullName>
    </recommendedName>
    <alternativeName>
        <fullName>30S ribosomal protein S6</fullName>
    </alternativeName>
</protein>
<comment type="function">
    <text evidence="1">Binds together with bS18 to 16S ribosomal RNA.</text>
</comment>
<comment type="similarity">
    <text evidence="2">Belongs to the bacterial ribosomal protein bS6 family.</text>
</comment>
<sequence length="96" mass="10935">MRPYEIMVILDPTLDERTVAPSLETFLNVVRKDGGKVEKVDIWGKRRLAYEIAKHAEGIYVVIDVKAAPATVSELDRQLSLNESVLRTKVMRTDKH</sequence>
<proteinExistence type="inferred from homology"/>
<feature type="chain" id="PRO_0000176793" description="Small ribosomal subunit protein bS6">
    <location>
        <begin position="1"/>
        <end position="96"/>
    </location>
</feature>
<gene>
    <name type="primary">rpsF</name>
    <name type="ordered locus">BQ2027_MB0054</name>
</gene>
<reference key="1">
    <citation type="journal article" date="2003" name="Proc. Natl. Acad. Sci. U.S.A.">
        <title>The complete genome sequence of Mycobacterium bovis.</title>
        <authorList>
            <person name="Garnier T."/>
            <person name="Eiglmeier K."/>
            <person name="Camus J.-C."/>
            <person name="Medina N."/>
            <person name="Mansoor H."/>
            <person name="Pryor M."/>
            <person name="Duthoy S."/>
            <person name="Grondin S."/>
            <person name="Lacroix C."/>
            <person name="Monsempe C."/>
            <person name="Simon S."/>
            <person name="Harris B."/>
            <person name="Atkin R."/>
            <person name="Doggett J."/>
            <person name="Mayes R."/>
            <person name="Keating L."/>
            <person name="Wheeler P.R."/>
            <person name="Parkhill J."/>
            <person name="Barrell B.G."/>
            <person name="Cole S.T."/>
            <person name="Gordon S.V."/>
            <person name="Hewinson R.G."/>
        </authorList>
    </citation>
    <scope>NUCLEOTIDE SEQUENCE [LARGE SCALE GENOMIC DNA]</scope>
    <source>
        <strain>ATCC BAA-935 / AF2122/97</strain>
    </source>
</reference>
<reference key="2">
    <citation type="journal article" date="2017" name="Genome Announc.">
        <title>Updated reference genome sequence and annotation of Mycobacterium bovis AF2122/97.</title>
        <authorList>
            <person name="Malone K.M."/>
            <person name="Farrell D."/>
            <person name="Stuber T.P."/>
            <person name="Schubert O.T."/>
            <person name="Aebersold R."/>
            <person name="Robbe-Austerman S."/>
            <person name="Gordon S.V."/>
        </authorList>
    </citation>
    <scope>NUCLEOTIDE SEQUENCE [LARGE SCALE GENOMIC DNA]</scope>
    <scope>GENOME REANNOTATION</scope>
    <source>
        <strain>ATCC BAA-935 / AF2122/97</strain>
    </source>
</reference>
<evidence type="ECO:0000250" key="1"/>
<evidence type="ECO:0000305" key="2"/>
<keyword id="KW-1185">Reference proteome</keyword>
<keyword id="KW-0687">Ribonucleoprotein</keyword>
<keyword id="KW-0689">Ribosomal protein</keyword>
<keyword id="KW-0694">RNA-binding</keyword>
<keyword id="KW-0699">rRNA-binding</keyword>
<accession>P66592</accession>
<accession>A0A1R3XU69</accession>
<accession>P71710</accession>
<accession>X2BDX0</accession>
<organism>
    <name type="scientific">Mycobacterium bovis (strain ATCC BAA-935 / AF2122/97)</name>
    <dbReference type="NCBI Taxonomy" id="233413"/>
    <lineage>
        <taxon>Bacteria</taxon>
        <taxon>Bacillati</taxon>
        <taxon>Actinomycetota</taxon>
        <taxon>Actinomycetes</taxon>
        <taxon>Mycobacteriales</taxon>
        <taxon>Mycobacteriaceae</taxon>
        <taxon>Mycobacterium</taxon>
        <taxon>Mycobacterium tuberculosis complex</taxon>
    </lineage>
</organism>
<dbReference type="EMBL" id="LT708304">
    <property type="protein sequence ID" value="SIT98421.1"/>
    <property type="molecule type" value="Genomic_DNA"/>
</dbReference>
<dbReference type="RefSeq" id="NP_853723.1">
    <property type="nucleotide sequence ID" value="NC_002945.3"/>
</dbReference>
<dbReference type="RefSeq" id="WP_003400520.1">
    <property type="nucleotide sequence ID" value="NC_002945.4"/>
</dbReference>
<dbReference type="SMR" id="P66592"/>
<dbReference type="GeneID" id="45424012"/>
<dbReference type="KEGG" id="mbo:BQ2027_MB0054"/>
<dbReference type="PATRIC" id="fig|233413.5.peg.60"/>
<dbReference type="Proteomes" id="UP000001419">
    <property type="component" value="Chromosome"/>
</dbReference>
<dbReference type="GO" id="GO:0005737">
    <property type="term" value="C:cytoplasm"/>
    <property type="evidence" value="ECO:0007669"/>
    <property type="project" value="UniProtKB-ARBA"/>
</dbReference>
<dbReference type="GO" id="GO:1990904">
    <property type="term" value="C:ribonucleoprotein complex"/>
    <property type="evidence" value="ECO:0007669"/>
    <property type="project" value="UniProtKB-KW"/>
</dbReference>
<dbReference type="GO" id="GO:0005840">
    <property type="term" value="C:ribosome"/>
    <property type="evidence" value="ECO:0007669"/>
    <property type="project" value="UniProtKB-KW"/>
</dbReference>
<dbReference type="GO" id="GO:0070181">
    <property type="term" value="F:small ribosomal subunit rRNA binding"/>
    <property type="evidence" value="ECO:0007669"/>
    <property type="project" value="TreeGrafter"/>
</dbReference>
<dbReference type="GO" id="GO:0003735">
    <property type="term" value="F:structural constituent of ribosome"/>
    <property type="evidence" value="ECO:0007669"/>
    <property type="project" value="InterPro"/>
</dbReference>
<dbReference type="GO" id="GO:0006412">
    <property type="term" value="P:translation"/>
    <property type="evidence" value="ECO:0007669"/>
    <property type="project" value="UniProtKB-UniRule"/>
</dbReference>
<dbReference type="CDD" id="cd00473">
    <property type="entry name" value="bS6"/>
    <property type="match status" value="1"/>
</dbReference>
<dbReference type="FunFam" id="3.30.70.60:FF:000002">
    <property type="entry name" value="30S ribosomal protein S6"/>
    <property type="match status" value="1"/>
</dbReference>
<dbReference type="Gene3D" id="3.30.70.60">
    <property type="match status" value="1"/>
</dbReference>
<dbReference type="HAMAP" id="MF_00360">
    <property type="entry name" value="Ribosomal_bS6"/>
    <property type="match status" value="1"/>
</dbReference>
<dbReference type="InterPro" id="IPR000529">
    <property type="entry name" value="Ribosomal_bS6"/>
</dbReference>
<dbReference type="InterPro" id="IPR020815">
    <property type="entry name" value="Ribosomal_bS6_CS"/>
</dbReference>
<dbReference type="InterPro" id="IPR035980">
    <property type="entry name" value="Ribosomal_bS6_sf"/>
</dbReference>
<dbReference type="InterPro" id="IPR020814">
    <property type="entry name" value="Ribosomal_S6_plastid/chlpt"/>
</dbReference>
<dbReference type="InterPro" id="IPR014717">
    <property type="entry name" value="Transl_elong_EF1B/ribsomal_bS6"/>
</dbReference>
<dbReference type="NCBIfam" id="TIGR00166">
    <property type="entry name" value="S6"/>
    <property type="match status" value="1"/>
</dbReference>
<dbReference type="PANTHER" id="PTHR21011">
    <property type="entry name" value="MITOCHONDRIAL 28S RIBOSOMAL PROTEIN S6"/>
    <property type="match status" value="1"/>
</dbReference>
<dbReference type="PANTHER" id="PTHR21011:SF1">
    <property type="entry name" value="SMALL RIBOSOMAL SUBUNIT PROTEIN BS6M"/>
    <property type="match status" value="1"/>
</dbReference>
<dbReference type="Pfam" id="PF01250">
    <property type="entry name" value="Ribosomal_S6"/>
    <property type="match status" value="1"/>
</dbReference>
<dbReference type="SUPFAM" id="SSF54995">
    <property type="entry name" value="Ribosomal protein S6"/>
    <property type="match status" value="1"/>
</dbReference>
<dbReference type="PROSITE" id="PS01048">
    <property type="entry name" value="RIBOSOMAL_S6"/>
    <property type="match status" value="1"/>
</dbReference>
<name>RS6_MYCBO</name>